<feature type="chain" id="PRO_0000397103" description="Ribose 1,5-bisphosphate isomerase">
    <location>
        <begin position="1"/>
        <end position="323"/>
    </location>
</feature>
<feature type="active site" description="Proton acceptor" evidence="2">
    <location>
        <position position="130"/>
    </location>
</feature>
<feature type="active site" description="Proton donor" evidence="2">
    <location>
        <position position="199"/>
    </location>
</feature>
<feature type="binding site" evidence="2">
    <location>
        <begin position="22"/>
        <end position="25"/>
    </location>
    <ligand>
        <name>substrate</name>
    </ligand>
</feature>
<feature type="binding site" evidence="2">
    <location>
        <position position="65"/>
    </location>
    <ligand>
        <name>substrate</name>
    </ligand>
</feature>
<feature type="binding site" evidence="2">
    <location>
        <begin position="209"/>
        <end position="210"/>
    </location>
    <ligand>
        <name>substrate</name>
    </ligand>
</feature>
<feature type="binding site" evidence="2">
    <location>
        <position position="235"/>
    </location>
    <ligand>
        <name>substrate</name>
    </ligand>
</feature>
<feature type="cross-link" description="Glycyl lysine isopeptide (Lys-Gly) (interchain with G-Cter in SAMP2)" evidence="3">
    <location>
        <position position="210"/>
    </location>
</feature>
<gene>
    <name type="ordered locus">HVO_0966</name>
</gene>
<name>R15PI_HALVD</name>
<dbReference type="EC" id="5.3.1.29" evidence="2"/>
<dbReference type="EMBL" id="CP001956">
    <property type="protein sequence ID" value="ADE03061.1"/>
    <property type="molecule type" value="Genomic_DNA"/>
</dbReference>
<dbReference type="RefSeq" id="WP_004043979.1">
    <property type="nucleotide sequence ID" value="NC_013967.1"/>
</dbReference>
<dbReference type="SMR" id="D4GV73"/>
<dbReference type="STRING" id="309800.HVO_0966"/>
<dbReference type="PaxDb" id="309800-C498_13946"/>
<dbReference type="EnsemblBacteria" id="ADE03061">
    <property type="protein sequence ID" value="ADE03061"/>
    <property type="gene ID" value="HVO_0966"/>
</dbReference>
<dbReference type="GeneID" id="8925565"/>
<dbReference type="KEGG" id="hvo:HVO_0966"/>
<dbReference type="eggNOG" id="arCOG01124">
    <property type="taxonomic scope" value="Archaea"/>
</dbReference>
<dbReference type="HOGENOM" id="CLU_016218_2_1_2"/>
<dbReference type="OrthoDB" id="27639at2157"/>
<dbReference type="Proteomes" id="UP000008243">
    <property type="component" value="Chromosome"/>
</dbReference>
<dbReference type="GO" id="GO:0043917">
    <property type="term" value="F:ribose 1,5-bisphosphate isomerase activity"/>
    <property type="evidence" value="ECO:0007669"/>
    <property type="project" value="UniProtKB-UniRule"/>
</dbReference>
<dbReference type="GO" id="GO:0046523">
    <property type="term" value="F:S-methyl-5-thioribose-1-phosphate isomerase activity"/>
    <property type="evidence" value="ECO:0007669"/>
    <property type="project" value="TreeGrafter"/>
</dbReference>
<dbReference type="GO" id="GO:0019509">
    <property type="term" value="P:L-methionine salvage from methylthioadenosine"/>
    <property type="evidence" value="ECO:0007669"/>
    <property type="project" value="TreeGrafter"/>
</dbReference>
<dbReference type="GO" id="GO:0019323">
    <property type="term" value="P:pentose catabolic process"/>
    <property type="evidence" value="ECO:0007669"/>
    <property type="project" value="UniProtKB-UniRule"/>
</dbReference>
<dbReference type="FunFam" id="1.20.120.420:FF:000011">
    <property type="entry name" value="Ribose 1,5-bisphosphate isomerase"/>
    <property type="match status" value="1"/>
</dbReference>
<dbReference type="FunFam" id="3.40.50.10470:FF:000019">
    <property type="entry name" value="Ribose 1,5-bisphosphate isomerase"/>
    <property type="match status" value="1"/>
</dbReference>
<dbReference type="Gene3D" id="1.20.120.420">
    <property type="entry name" value="translation initiation factor eif-2b, domain 1"/>
    <property type="match status" value="1"/>
</dbReference>
<dbReference type="Gene3D" id="3.40.50.10470">
    <property type="entry name" value="Translation initiation factor eif-2b, domain 2"/>
    <property type="match status" value="1"/>
</dbReference>
<dbReference type="HAMAP" id="MF_02230">
    <property type="entry name" value="R15P_isomerase"/>
    <property type="match status" value="1"/>
</dbReference>
<dbReference type="InterPro" id="IPR000649">
    <property type="entry name" value="IF-2B-related"/>
</dbReference>
<dbReference type="InterPro" id="IPR042529">
    <property type="entry name" value="IF_2B-like_C"/>
</dbReference>
<dbReference type="InterPro" id="IPR011559">
    <property type="entry name" value="Initiation_fac_2B_a/b/d"/>
</dbReference>
<dbReference type="InterPro" id="IPR027363">
    <property type="entry name" value="M1Pi_N"/>
</dbReference>
<dbReference type="InterPro" id="IPR037171">
    <property type="entry name" value="NagB/RpiA_transferase-like"/>
</dbReference>
<dbReference type="InterPro" id="IPR005250">
    <property type="entry name" value="R15Pi"/>
</dbReference>
<dbReference type="NCBIfam" id="TIGR00524">
    <property type="entry name" value="eIF-2B_rel"/>
    <property type="match status" value="1"/>
</dbReference>
<dbReference type="NCBIfam" id="TIGR00511">
    <property type="entry name" value="ribulose_e2b2"/>
    <property type="match status" value="1"/>
</dbReference>
<dbReference type="PANTHER" id="PTHR43475">
    <property type="entry name" value="METHYLTHIORIBOSE-1-PHOSPHATE ISOMERASE"/>
    <property type="match status" value="1"/>
</dbReference>
<dbReference type="PANTHER" id="PTHR43475:SF2">
    <property type="entry name" value="RIBOSE 1,5-BISPHOSPHATE ISOMERASE"/>
    <property type="match status" value="1"/>
</dbReference>
<dbReference type="Pfam" id="PF01008">
    <property type="entry name" value="IF-2B"/>
    <property type="match status" value="1"/>
</dbReference>
<dbReference type="SUPFAM" id="SSF100950">
    <property type="entry name" value="NagB/RpiA/CoA transferase-like"/>
    <property type="match status" value="1"/>
</dbReference>
<keyword id="KW-0119">Carbohydrate metabolism</keyword>
<keyword id="KW-0413">Isomerase</keyword>
<keyword id="KW-1017">Isopeptide bond</keyword>
<keyword id="KW-1185">Reference proteome</keyword>
<keyword id="KW-0832">Ubl conjugation</keyword>
<sequence>MDDRVHPEVRRTATEIDTMEIRGAATIADAAARALRTQATESDAADAEAFRAELRATARTLHETRPTAVSLPNALRYVLRDMSSTTVEGLRQSVVDSADEFCARLERAQADLGQVGANRLRDGDTIMTHCHSTDALACVEAAVEQGKHIEAVVKETRPRNQGHITAKRLHELGVPVTLIVDSAARRYLNDVDHVLVGADAVAADGSVINKIGTSGLAVNARERGTPIMVAAQTLKLHPGTMTGHTVDIEMRDTAEVVDDDTLADLGNPTVKNPAFDVTPPRYVDAIVTERGQFPPESIVILMRELFGEGTSEPWAEPSPRAEP</sequence>
<reference key="1">
    <citation type="journal article" date="2010" name="PLoS ONE">
        <title>The complete genome sequence of Haloferax volcanii DS2, a model archaeon.</title>
        <authorList>
            <person name="Hartman A.L."/>
            <person name="Norais C."/>
            <person name="Badger J.H."/>
            <person name="Delmas S."/>
            <person name="Haldenby S."/>
            <person name="Madupu R."/>
            <person name="Robinson J."/>
            <person name="Khouri H."/>
            <person name="Ren Q."/>
            <person name="Lowe T.M."/>
            <person name="Maupin-Furlow J."/>
            <person name="Pohlschroder M."/>
            <person name="Daniels C."/>
            <person name="Pfeiffer F."/>
            <person name="Allers T."/>
            <person name="Eisen J.A."/>
        </authorList>
    </citation>
    <scope>NUCLEOTIDE SEQUENCE [LARGE SCALE GENOMIC DNA]</scope>
    <source>
        <strain>ATCC 29605 / DSM 3757 / JCM 8879 / NBRC 14742 / NCIMB 2012 / VKM B-1768 / DS2</strain>
    </source>
</reference>
<reference key="2">
    <citation type="journal article" date="2010" name="Nature">
        <title>Ubiquitin-like small archaeal modifier proteins (SAMPs) in Haloferax volcanii.</title>
        <authorList>
            <person name="Humbard M.A."/>
            <person name="Miranda H.V."/>
            <person name="Lim J.M."/>
            <person name="Krause D.J."/>
            <person name="Pritz J.R."/>
            <person name="Zhou G."/>
            <person name="Chen S."/>
            <person name="Wells L."/>
            <person name="Maupin-Furlow J.A."/>
        </authorList>
    </citation>
    <scope>SAMPYLATION AT LYS-210</scope>
    <scope>IDENTIFICATION BY MASS SPECTROMETRY</scope>
</reference>
<protein>
    <recommendedName>
        <fullName evidence="2">Ribose 1,5-bisphosphate isomerase</fullName>
        <shortName evidence="2">R15P isomerase</shortName>
        <shortName evidence="2">R15Pi</shortName>
        <ecNumber evidence="2">5.3.1.29</ecNumber>
    </recommendedName>
    <alternativeName>
        <fullName evidence="2">Ribulose 1,5-bisphosphate synthase</fullName>
        <shortName evidence="2">RuBP synthase</shortName>
    </alternativeName>
</protein>
<organism>
    <name type="scientific">Haloferax volcanii (strain ATCC 29605 / DSM 3757 / JCM 8879 / NBRC 14742 / NCIMB 2012 / VKM B-1768 / DS2)</name>
    <name type="common">Halobacterium volcanii</name>
    <dbReference type="NCBI Taxonomy" id="309800"/>
    <lineage>
        <taxon>Archaea</taxon>
        <taxon>Methanobacteriati</taxon>
        <taxon>Methanobacteriota</taxon>
        <taxon>Stenosarchaea group</taxon>
        <taxon>Halobacteria</taxon>
        <taxon>Halobacteriales</taxon>
        <taxon>Haloferacaceae</taxon>
        <taxon>Haloferax</taxon>
    </lineage>
</organism>
<accession>D4GV73</accession>
<comment type="function">
    <text evidence="1">Catalyzes the isomerization of ribose 1,5-bisphosphate (R15P) to ribulose 1,5-bisphosphate (RuBP), the CO(2) acceptor and substrate for RubisCO. Functions in an archaeal AMP degradation pathway, together with AMP phosphorylase and RubisCO.</text>
</comment>
<comment type="catalytic activity">
    <reaction evidence="2">
        <text>alpha-D-ribose 1,5-bisphosphate = D-ribulose 1,5-bisphosphate</text>
        <dbReference type="Rhea" id="RHEA:32243"/>
        <dbReference type="ChEBI" id="CHEBI:57870"/>
        <dbReference type="ChEBI" id="CHEBI:68688"/>
        <dbReference type="EC" id="5.3.1.29"/>
    </reaction>
</comment>
<comment type="miscellaneous">
    <text evidence="2">Reaction proceeds via a cis-phosphoenolate intermediate.</text>
</comment>
<comment type="similarity">
    <text evidence="2 4">Belongs to the eIF-2B alpha/beta/delta subunits family. R15P isomerase subfamily.</text>
</comment>
<proteinExistence type="evidence at protein level"/>
<evidence type="ECO:0000250" key="1">
    <source>
        <dbReference type="UniProtKB" id="Q5JFM9"/>
    </source>
</evidence>
<evidence type="ECO:0000255" key="2">
    <source>
        <dbReference type="HAMAP-Rule" id="MF_02230"/>
    </source>
</evidence>
<evidence type="ECO:0000269" key="3">
    <source>
    </source>
</evidence>
<evidence type="ECO:0000305" key="4"/>